<reference key="1">
    <citation type="journal article" date="2001" name="Proc. Natl. Acad. Sci. U.S.A.">
        <title>Complete genomic sequence of Pasteurella multocida Pm70.</title>
        <authorList>
            <person name="May B.J."/>
            <person name="Zhang Q."/>
            <person name="Li L.L."/>
            <person name="Paustian M.L."/>
            <person name="Whittam T.S."/>
            <person name="Kapur V."/>
        </authorList>
    </citation>
    <scope>NUCLEOTIDE SEQUENCE [LARGE SCALE GENOMIC DNA]</scope>
    <source>
        <strain>Pm70</strain>
    </source>
</reference>
<proteinExistence type="inferred from homology"/>
<name>RECQ_PASMU</name>
<accession>Q9CL21</accession>
<feature type="chain" id="PRO_0000205037" description="ATP-dependent DNA helicase RecQ">
    <location>
        <begin position="1"/>
        <end position="632"/>
    </location>
</feature>
<feature type="domain" description="Helicase ATP-binding" evidence="3">
    <location>
        <begin position="47"/>
        <end position="215"/>
    </location>
</feature>
<feature type="domain" description="Helicase C-terminal" evidence="4">
    <location>
        <begin position="236"/>
        <end position="385"/>
    </location>
</feature>
<feature type="domain" description="HRDC" evidence="2">
    <location>
        <begin position="544"/>
        <end position="624"/>
    </location>
</feature>
<feature type="short sequence motif" description="DEAH box">
    <location>
        <begin position="159"/>
        <end position="162"/>
    </location>
</feature>
<feature type="binding site" evidence="3">
    <location>
        <begin position="60"/>
        <end position="67"/>
    </location>
    <ligand>
        <name>ATP</name>
        <dbReference type="ChEBI" id="CHEBI:30616"/>
    </ligand>
</feature>
<feature type="binding site" evidence="1">
    <location>
        <position position="393"/>
    </location>
    <ligand>
        <name>Zn(2+)</name>
        <dbReference type="ChEBI" id="CHEBI:29105"/>
    </ligand>
</feature>
<feature type="binding site" evidence="1">
    <location>
        <position position="410"/>
    </location>
    <ligand>
        <name>Zn(2+)</name>
        <dbReference type="ChEBI" id="CHEBI:29105"/>
    </ligand>
</feature>
<feature type="binding site" evidence="1">
    <location>
        <position position="413"/>
    </location>
    <ligand>
        <name>Zn(2+)</name>
        <dbReference type="ChEBI" id="CHEBI:29105"/>
    </ligand>
</feature>
<feature type="binding site" evidence="1">
    <location>
        <position position="416"/>
    </location>
    <ligand>
        <name>Zn(2+)</name>
        <dbReference type="ChEBI" id="CHEBI:29105"/>
    </ligand>
</feature>
<dbReference type="EC" id="5.6.2.4" evidence="1"/>
<dbReference type="EMBL" id="AE004439">
    <property type="protein sequence ID" value="AAK03511.1"/>
    <property type="molecule type" value="Genomic_DNA"/>
</dbReference>
<dbReference type="RefSeq" id="WP_010907159.1">
    <property type="nucleotide sequence ID" value="NC_002663.1"/>
</dbReference>
<dbReference type="SMR" id="Q9CL21"/>
<dbReference type="STRING" id="272843.PM1427"/>
<dbReference type="EnsemblBacteria" id="AAK03511">
    <property type="protein sequence ID" value="AAK03511"/>
    <property type="gene ID" value="PM1427"/>
</dbReference>
<dbReference type="KEGG" id="pmu:PM1427"/>
<dbReference type="PATRIC" id="fig|272843.6.peg.1441"/>
<dbReference type="HOGENOM" id="CLU_001103_14_3_6"/>
<dbReference type="OrthoDB" id="9760034at2"/>
<dbReference type="Proteomes" id="UP000000809">
    <property type="component" value="Chromosome"/>
</dbReference>
<dbReference type="GO" id="GO:0043590">
    <property type="term" value="C:bacterial nucleoid"/>
    <property type="evidence" value="ECO:0007669"/>
    <property type="project" value="TreeGrafter"/>
</dbReference>
<dbReference type="GO" id="GO:0005737">
    <property type="term" value="C:cytoplasm"/>
    <property type="evidence" value="ECO:0007669"/>
    <property type="project" value="TreeGrafter"/>
</dbReference>
<dbReference type="GO" id="GO:0030894">
    <property type="term" value="C:replisome"/>
    <property type="evidence" value="ECO:0007669"/>
    <property type="project" value="TreeGrafter"/>
</dbReference>
<dbReference type="GO" id="GO:0043138">
    <property type="term" value="F:3'-5' DNA helicase activity"/>
    <property type="evidence" value="ECO:0007669"/>
    <property type="project" value="InterPro"/>
</dbReference>
<dbReference type="GO" id="GO:0005524">
    <property type="term" value="F:ATP binding"/>
    <property type="evidence" value="ECO:0007669"/>
    <property type="project" value="UniProtKB-KW"/>
</dbReference>
<dbReference type="GO" id="GO:0016887">
    <property type="term" value="F:ATP hydrolysis activity"/>
    <property type="evidence" value="ECO:0007669"/>
    <property type="project" value="RHEA"/>
</dbReference>
<dbReference type="GO" id="GO:0003677">
    <property type="term" value="F:DNA binding"/>
    <property type="evidence" value="ECO:0007669"/>
    <property type="project" value="UniProtKB-KW"/>
</dbReference>
<dbReference type="GO" id="GO:0009378">
    <property type="term" value="F:four-way junction helicase activity"/>
    <property type="evidence" value="ECO:0007669"/>
    <property type="project" value="TreeGrafter"/>
</dbReference>
<dbReference type="GO" id="GO:0046872">
    <property type="term" value="F:metal ion binding"/>
    <property type="evidence" value="ECO:0007669"/>
    <property type="project" value="UniProtKB-KW"/>
</dbReference>
<dbReference type="GO" id="GO:0006310">
    <property type="term" value="P:DNA recombination"/>
    <property type="evidence" value="ECO:0007669"/>
    <property type="project" value="UniProtKB-KW"/>
</dbReference>
<dbReference type="GO" id="GO:0006281">
    <property type="term" value="P:DNA repair"/>
    <property type="evidence" value="ECO:0007669"/>
    <property type="project" value="UniProtKB-KW"/>
</dbReference>
<dbReference type="GO" id="GO:0006260">
    <property type="term" value="P:DNA replication"/>
    <property type="evidence" value="ECO:0007669"/>
    <property type="project" value="InterPro"/>
</dbReference>
<dbReference type="GO" id="GO:0009432">
    <property type="term" value="P:SOS response"/>
    <property type="evidence" value="ECO:0007669"/>
    <property type="project" value="InterPro"/>
</dbReference>
<dbReference type="CDD" id="cd17920">
    <property type="entry name" value="DEXHc_RecQ"/>
    <property type="match status" value="1"/>
</dbReference>
<dbReference type="CDD" id="cd18794">
    <property type="entry name" value="SF2_C_RecQ"/>
    <property type="match status" value="1"/>
</dbReference>
<dbReference type="FunFam" id="1.10.10.10:FF:000175">
    <property type="entry name" value="ATP-dependent DNA helicase RecQ"/>
    <property type="match status" value="1"/>
</dbReference>
<dbReference type="FunFam" id="1.10.150.80:FF:000002">
    <property type="entry name" value="ATP-dependent DNA helicase RecQ"/>
    <property type="match status" value="1"/>
</dbReference>
<dbReference type="FunFam" id="3.40.50.300:FF:000296">
    <property type="entry name" value="ATP-dependent DNA helicase RecQ"/>
    <property type="match status" value="1"/>
</dbReference>
<dbReference type="FunFam" id="3.40.50.300:FF:000156">
    <property type="entry name" value="ATP-dependent DNA helicase recQ"/>
    <property type="match status" value="1"/>
</dbReference>
<dbReference type="Gene3D" id="1.10.150.80">
    <property type="entry name" value="HRDC domain"/>
    <property type="match status" value="1"/>
</dbReference>
<dbReference type="Gene3D" id="3.40.50.300">
    <property type="entry name" value="P-loop containing nucleotide triphosphate hydrolases"/>
    <property type="match status" value="2"/>
</dbReference>
<dbReference type="Gene3D" id="1.10.10.10">
    <property type="entry name" value="Winged helix-like DNA-binding domain superfamily/Winged helix DNA-binding domain"/>
    <property type="match status" value="1"/>
</dbReference>
<dbReference type="InterPro" id="IPR011545">
    <property type="entry name" value="DEAD/DEAH_box_helicase_dom"/>
</dbReference>
<dbReference type="InterPro" id="IPR004589">
    <property type="entry name" value="DNA_helicase_ATP-dep_RecQ"/>
</dbReference>
<dbReference type="InterPro" id="IPR006293">
    <property type="entry name" value="DNA_helicase_ATP-dep_RecQ_bac"/>
</dbReference>
<dbReference type="InterPro" id="IPR014001">
    <property type="entry name" value="Helicase_ATP-bd"/>
</dbReference>
<dbReference type="InterPro" id="IPR001650">
    <property type="entry name" value="Helicase_C-like"/>
</dbReference>
<dbReference type="InterPro" id="IPR010997">
    <property type="entry name" value="HRDC-like_sf"/>
</dbReference>
<dbReference type="InterPro" id="IPR002121">
    <property type="entry name" value="HRDC_dom"/>
</dbReference>
<dbReference type="InterPro" id="IPR044876">
    <property type="entry name" value="HRDC_dom_sf"/>
</dbReference>
<dbReference type="InterPro" id="IPR027417">
    <property type="entry name" value="P-loop_NTPase"/>
</dbReference>
<dbReference type="InterPro" id="IPR032284">
    <property type="entry name" value="RecQ_Zn-bd"/>
</dbReference>
<dbReference type="InterPro" id="IPR018982">
    <property type="entry name" value="RQC_domain"/>
</dbReference>
<dbReference type="InterPro" id="IPR036388">
    <property type="entry name" value="WH-like_DNA-bd_sf"/>
</dbReference>
<dbReference type="NCBIfam" id="TIGR01389">
    <property type="entry name" value="recQ"/>
    <property type="match status" value="1"/>
</dbReference>
<dbReference type="NCBIfam" id="TIGR00614">
    <property type="entry name" value="recQ_fam"/>
    <property type="match status" value="1"/>
</dbReference>
<dbReference type="PANTHER" id="PTHR13710:SF105">
    <property type="entry name" value="ATP-DEPENDENT DNA HELICASE Q1"/>
    <property type="match status" value="1"/>
</dbReference>
<dbReference type="PANTHER" id="PTHR13710">
    <property type="entry name" value="DNA HELICASE RECQ FAMILY MEMBER"/>
    <property type="match status" value="1"/>
</dbReference>
<dbReference type="Pfam" id="PF00270">
    <property type="entry name" value="DEAD"/>
    <property type="match status" value="1"/>
</dbReference>
<dbReference type="Pfam" id="PF00271">
    <property type="entry name" value="Helicase_C"/>
    <property type="match status" value="1"/>
</dbReference>
<dbReference type="Pfam" id="PF00570">
    <property type="entry name" value="HRDC"/>
    <property type="match status" value="1"/>
</dbReference>
<dbReference type="Pfam" id="PF16124">
    <property type="entry name" value="RecQ_Zn_bind"/>
    <property type="match status" value="1"/>
</dbReference>
<dbReference type="Pfam" id="PF09382">
    <property type="entry name" value="RQC"/>
    <property type="match status" value="1"/>
</dbReference>
<dbReference type="SMART" id="SM00487">
    <property type="entry name" value="DEXDc"/>
    <property type="match status" value="1"/>
</dbReference>
<dbReference type="SMART" id="SM00490">
    <property type="entry name" value="HELICc"/>
    <property type="match status" value="1"/>
</dbReference>
<dbReference type="SMART" id="SM00341">
    <property type="entry name" value="HRDC"/>
    <property type="match status" value="1"/>
</dbReference>
<dbReference type="SMART" id="SM00956">
    <property type="entry name" value="RQC"/>
    <property type="match status" value="1"/>
</dbReference>
<dbReference type="SUPFAM" id="SSF47819">
    <property type="entry name" value="HRDC-like"/>
    <property type="match status" value="1"/>
</dbReference>
<dbReference type="SUPFAM" id="SSF52540">
    <property type="entry name" value="P-loop containing nucleoside triphosphate hydrolases"/>
    <property type="match status" value="2"/>
</dbReference>
<dbReference type="PROSITE" id="PS51192">
    <property type="entry name" value="HELICASE_ATP_BIND_1"/>
    <property type="match status" value="1"/>
</dbReference>
<dbReference type="PROSITE" id="PS51194">
    <property type="entry name" value="HELICASE_CTER"/>
    <property type="match status" value="1"/>
</dbReference>
<dbReference type="PROSITE" id="PS50967">
    <property type="entry name" value="HRDC"/>
    <property type="match status" value="1"/>
</dbReference>
<comment type="function">
    <text evidence="1">An ATP-dependent DNA helicase which unwinds DNA in a 3'-5' direction. Plays a role in recombination.</text>
</comment>
<comment type="catalytic activity">
    <reaction evidence="1">
        <text>Couples ATP hydrolysis with the unwinding of duplex DNA by translocating in the 3'-5' direction.</text>
        <dbReference type="EC" id="5.6.2.4"/>
    </reaction>
</comment>
<comment type="catalytic activity">
    <reaction evidence="1">
        <text>ATP + H2O = ADP + phosphate + H(+)</text>
        <dbReference type="Rhea" id="RHEA:13065"/>
        <dbReference type="ChEBI" id="CHEBI:15377"/>
        <dbReference type="ChEBI" id="CHEBI:15378"/>
        <dbReference type="ChEBI" id="CHEBI:30616"/>
        <dbReference type="ChEBI" id="CHEBI:43474"/>
        <dbReference type="ChEBI" id="CHEBI:456216"/>
    </reaction>
</comment>
<comment type="cofactor">
    <cofactor evidence="1">
        <name>Mg(2+)</name>
        <dbReference type="ChEBI" id="CHEBI:18420"/>
    </cofactor>
    <text evidence="1">Requires Mg(2+) for helicase activity.</text>
</comment>
<comment type="cofactor">
    <cofactor evidence="1">
        <name>Zn(2+)</name>
        <dbReference type="ChEBI" id="CHEBI:29105"/>
    </cofactor>
</comment>
<comment type="similarity">
    <text evidence="6">Belongs to the helicase family. RecQ subfamily.</text>
</comment>
<evidence type="ECO:0000250" key="1">
    <source>
        <dbReference type="UniProtKB" id="P15043"/>
    </source>
</evidence>
<evidence type="ECO:0000255" key="2">
    <source>
        <dbReference type="PROSITE-ProRule" id="PRU00328"/>
    </source>
</evidence>
<evidence type="ECO:0000255" key="3">
    <source>
        <dbReference type="PROSITE-ProRule" id="PRU00541"/>
    </source>
</evidence>
<evidence type="ECO:0000255" key="4">
    <source>
        <dbReference type="PROSITE-ProRule" id="PRU00542"/>
    </source>
</evidence>
<evidence type="ECO:0000303" key="5">
    <source>
    </source>
</evidence>
<evidence type="ECO:0000305" key="6"/>
<protein>
    <recommendedName>
        <fullName>ATP-dependent DNA helicase RecQ</fullName>
        <ecNumber evidence="1">5.6.2.4</ecNumber>
    </recommendedName>
    <alternativeName>
        <fullName evidence="6">DNA 3'-5' helicase RecQ</fullName>
    </alternativeName>
</protein>
<gene>
    <name evidence="5" type="primary">recQ</name>
    <name type="ordered locus">PM1427</name>
</gene>
<sequence>MFSSSLLSKDNKSAVDFHEIPLKQTALDVLHAVFGYQSFRKGQEEVIDATLMGKDSLVIMATGNGKSLCYQIPALCFEGLTLVISPLISLMKDQVDQLLANGIEADYLNSSQTFTEQQQVQNKLMSGTLKLLYVSPEKVMTTSFFHLISHCKVSFVAIDEAHCISQWGHDFRPEYTQLGGLKSCFPHAPIMALTATADHATRQDILRHLNLQSPHVYIGSFDRPNIRYTLVEKFKPMEQLCRFVLGQKGKSGIIYCNSRSKVERIAESLRNKGVSAQAYHAGLETSQREQVQRAFQRDNVQVVVATIAFGMGINKSNVRFVVHFDLPRSIESYYQETGRAGRDDLPAEAVLFYEPADYAWLHKILLEKPESPQRQIEALKLQAIGEFAESQTCRRLVLLNYFGEHQQKPCQNCDICLDPPKQYDGLIDAQKVMSTIYRIGQRFGVHYVIAVLRGLSNQKIKDNQHEQLSVYGIGKDKSKEHWQSVIRQLIHLGFIKQVFDHFNATLQLTENAKPILRGEQPLSLAMPRISSLTSVVAPQRYAIAQYDKDLFARLRFLRKQIADKENIPAYIVFNDATLQEMAQYQPTTKAEMLAINGVGATKFERFAQPFMQIIQQHKKVLTQHEPPLSLES</sequence>
<organism>
    <name type="scientific">Pasteurella multocida (strain Pm70)</name>
    <dbReference type="NCBI Taxonomy" id="272843"/>
    <lineage>
        <taxon>Bacteria</taxon>
        <taxon>Pseudomonadati</taxon>
        <taxon>Pseudomonadota</taxon>
        <taxon>Gammaproteobacteria</taxon>
        <taxon>Pasteurellales</taxon>
        <taxon>Pasteurellaceae</taxon>
        <taxon>Pasteurella</taxon>
    </lineage>
</organism>
<keyword id="KW-0067">ATP-binding</keyword>
<keyword id="KW-0227">DNA damage</keyword>
<keyword id="KW-0233">DNA recombination</keyword>
<keyword id="KW-0234">DNA repair</keyword>
<keyword id="KW-0238">DNA-binding</keyword>
<keyword id="KW-0347">Helicase</keyword>
<keyword id="KW-0378">Hydrolase</keyword>
<keyword id="KW-0413">Isomerase</keyword>
<keyword id="KW-0479">Metal-binding</keyword>
<keyword id="KW-0547">Nucleotide-binding</keyword>
<keyword id="KW-1185">Reference proteome</keyword>
<keyword id="KW-0862">Zinc</keyword>